<accession>O48060</accession>
<geneLocation type="mitochondrion"/>
<reference key="1">
    <citation type="thesis" date="1997" institute="Queen's University / Kingston" country="Canada">
        <title>Hic Sunt Serpentes -- molecular phylogenetics and the Boidae (Serpentes: Booidea).</title>
        <authorList>
            <person name="Campbell B.N."/>
        </authorList>
    </citation>
    <scope>NUCLEOTIDE SEQUENCE [GENOMIC DNA]</scope>
</reference>
<gene>
    <name type="primary">MT-CYB</name>
    <name type="synonym">COB</name>
    <name type="synonym">CYTB</name>
    <name type="synonym">MTCYB</name>
</gene>
<sequence>MPHQQILMLFGLLPVATNISTWWNFGSMLLACLTLQLLTGFFLAVHYTANINLAFSSIIHITRDVPYGWMMQNLHAIGASMFFICIYIHIARGLYYGSYLNKETWLSGTTLLIMLMATAFFGYVLPWGQMSFWAATVITNLLTAIPYLGSTMTTWLWGGFAINDPTLTRFFALHFILPFGIISLSSLHILLLHEEGSSNPLGTNSDIDKIPFHPYQTYKDMLMLTIMTIMLLTIVSFFPDIFNDPDNFSKANPLVTPQHIKPEWYFLFAYGILRSIPNKLGGALALTMSIMMLLTLPFTHTSKLRSMMFRPFMQLTFWTFTATFLVISWTATKPVEPPFTTISQVAALMYFLFFISNPIMGWLENKIMKL</sequence>
<dbReference type="EMBL" id="U69799">
    <property type="protein sequence ID" value="AAC01852.1"/>
    <property type="molecule type" value="Genomic_DNA"/>
</dbReference>
<dbReference type="EMBL" id="U69801">
    <property type="protein sequence ID" value="AAC01854.1"/>
    <property type="molecule type" value="Genomic_DNA"/>
</dbReference>
<dbReference type="EMBL" id="U69802">
    <property type="protein sequence ID" value="AAC01855.1"/>
    <property type="molecule type" value="Genomic_DNA"/>
</dbReference>
<dbReference type="SMR" id="O48060"/>
<dbReference type="GO" id="GO:0005743">
    <property type="term" value="C:mitochondrial inner membrane"/>
    <property type="evidence" value="ECO:0007669"/>
    <property type="project" value="UniProtKB-SubCell"/>
</dbReference>
<dbReference type="GO" id="GO:0045275">
    <property type="term" value="C:respiratory chain complex III"/>
    <property type="evidence" value="ECO:0007669"/>
    <property type="project" value="InterPro"/>
</dbReference>
<dbReference type="GO" id="GO:0046872">
    <property type="term" value="F:metal ion binding"/>
    <property type="evidence" value="ECO:0007669"/>
    <property type="project" value="UniProtKB-KW"/>
</dbReference>
<dbReference type="GO" id="GO:0008121">
    <property type="term" value="F:ubiquinol-cytochrome-c reductase activity"/>
    <property type="evidence" value="ECO:0007669"/>
    <property type="project" value="InterPro"/>
</dbReference>
<dbReference type="GO" id="GO:0006122">
    <property type="term" value="P:mitochondrial electron transport, ubiquinol to cytochrome c"/>
    <property type="evidence" value="ECO:0007669"/>
    <property type="project" value="TreeGrafter"/>
</dbReference>
<dbReference type="CDD" id="cd00290">
    <property type="entry name" value="cytochrome_b_C"/>
    <property type="match status" value="1"/>
</dbReference>
<dbReference type="CDD" id="cd00284">
    <property type="entry name" value="Cytochrome_b_N"/>
    <property type="match status" value="1"/>
</dbReference>
<dbReference type="Gene3D" id="1.20.810.10">
    <property type="entry name" value="Cytochrome Bc1 Complex, Chain C"/>
    <property type="match status" value="1"/>
</dbReference>
<dbReference type="InterPro" id="IPR005798">
    <property type="entry name" value="Cyt_b/b6_C"/>
</dbReference>
<dbReference type="InterPro" id="IPR036150">
    <property type="entry name" value="Cyt_b/b6_C_sf"/>
</dbReference>
<dbReference type="InterPro" id="IPR005797">
    <property type="entry name" value="Cyt_b/b6_N"/>
</dbReference>
<dbReference type="InterPro" id="IPR027387">
    <property type="entry name" value="Cytb/b6-like_sf"/>
</dbReference>
<dbReference type="InterPro" id="IPR030689">
    <property type="entry name" value="Cytochrome_b"/>
</dbReference>
<dbReference type="InterPro" id="IPR048260">
    <property type="entry name" value="Cytochrome_b_C_euk/bac"/>
</dbReference>
<dbReference type="InterPro" id="IPR048259">
    <property type="entry name" value="Cytochrome_b_N_euk/bac"/>
</dbReference>
<dbReference type="InterPro" id="IPR016174">
    <property type="entry name" value="Di-haem_cyt_TM"/>
</dbReference>
<dbReference type="PANTHER" id="PTHR19271">
    <property type="entry name" value="CYTOCHROME B"/>
    <property type="match status" value="1"/>
</dbReference>
<dbReference type="PANTHER" id="PTHR19271:SF16">
    <property type="entry name" value="CYTOCHROME B"/>
    <property type="match status" value="1"/>
</dbReference>
<dbReference type="Pfam" id="PF00032">
    <property type="entry name" value="Cytochrom_B_C"/>
    <property type="match status" value="1"/>
</dbReference>
<dbReference type="Pfam" id="PF00033">
    <property type="entry name" value="Cytochrome_B"/>
    <property type="match status" value="1"/>
</dbReference>
<dbReference type="PIRSF" id="PIRSF038885">
    <property type="entry name" value="COB"/>
    <property type="match status" value="1"/>
</dbReference>
<dbReference type="SUPFAM" id="SSF81648">
    <property type="entry name" value="a domain/subunit of cytochrome bc1 complex (Ubiquinol-cytochrome c reductase)"/>
    <property type="match status" value="1"/>
</dbReference>
<dbReference type="SUPFAM" id="SSF81342">
    <property type="entry name" value="Transmembrane di-heme cytochromes"/>
    <property type="match status" value="1"/>
</dbReference>
<dbReference type="PROSITE" id="PS51003">
    <property type="entry name" value="CYTB_CTER"/>
    <property type="match status" value="1"/>
</dbReference>
<dbReference type="PROSITE" id="PS51002">
    <property type="entry name" value="CYTB_NTER"/>
    <property type="match status" value="1"/>
</dbReference>
<evidence type="ECO:0000250" key="1"/>
<evidence type="ECO:0000250" key="2">
    <source>
        <dbReference type="UniProtKB" id="P00157"/>
    </source>
</evidence>
<evidence type="ECO:0000255" key="3">
    <source>
        <dbReference type="PROSITE-ProRule" id="PRU00967"/>
    </source>
</evidence>
<evidence type="ECO:0000255" key="4">
    <source>
        <dbReference type="PROSITE-ProRule" id="PRU00968"/>
    </source>
</evidence>
<protein>
    <recommendedName>
        <fullName>Cytochrome b</fullName>
    </recommendedName>
    <alternativeName>
        <fullName>Complex III subunit 3</fullName>
    </alternativeName>
    <alternativeName>
        <fullName>Complex III subunit III</fullName>
    </alternativeName>
    <alternativeName>
        <fullName>Cytochrome b-c1 complex subunit 3</fullName>
    </alternativeName>
    <alternativeName>
        <fullName>Ubiquinol-cytochrome-c reductase complex cytochrome b subunit</fullName>
    </alternativeName>
</protein>
<keyword id="KW-0249">Electron transport</keyword>
<keyword id="KW-0349">Heme</keyword>
<keyword id="KW-0408">Iron</keyword>
<keyword id="KW-0472">Membrane</keyword>
<keyword id="KW-0479">Metal-binding</keyword>
<keyword id="KW-0496">Mitochondrion</keyword>
<keyword id="KW-0999">Mitochondrion inner membrane</keyword>
<keyword id="KW-0679">Respiratory chain</keyword>
<keyword id="KW-0812">Transmembrane</keyword>
<keyword id="KW-1133">Transmembrane helix</keyword>
<keyword id="KW-0813">Transport</keyword>
<keyword id="KW-0830">Ubiquinone</keyword>
<comment type="function">
    <text evidence="2">Component of the ubiquinol-cytochrome c reductase complex (complex III or cytochrome b-c1 complex) that is part of the mitochondrial respiratory chain. The b-c1 complex mediates electron transfer from ubiquinol to cytochrome c. Contributes to the generation of a proton gradient across the mitochondrial membrane that is then used for ATP synthesis.</text>
</comment>
<comment type="cofactor">
    <cofactor evidence="2">
        <name>heme b</name>
        <dbReference type="ChEBI" id="CHEBI:60344"/>
    </cofactor>
    <text evidence="2">Binds 2 heme b groups non-covalently.</text>
</comment>
<comment type="subunit">
    <text evidence="2">The cytochrome bc1 complex contains 3 respiratory subunits (MT-CYB, CYC1 and UQCRFS1), 2 core proteins (UQCRC1 and UQCRC2) and probably 6 low-molecular weight proteins.</text>
</comment>
<comment type="subcellular location">
    <subcellularLocation>
        <location evidence="2">Mitochondrion inner membrane</location>
        <topology evidence="2">Multi-pass membrane protein</topology>
    </subcellularLocation>
</comment>
<comment type="miscellaneous">
    <text evidence="1">Heme 1 (or BL or b562) is low-potential and absorbs at about 562 nm, and heme 2 (or BH or b566) is high-potential and absorbs at about 566 nm.</text>
</comment>
<comment type="similarity">
    <text evidence="3 4">Belongs to the cytochrome b family.</text>
</comment>
<comment type="caution">
    <text evidence="2">The full-length protein contains only eight transmembrane helices, not nine as predicted by bioinformatics tools.</text>
</comment>
<organism>
    <name type="scientific">Chilabothrus strigilatus fosteri</name>
    <name type="common">Bimini Island boa constrictor</name>
    <name type="synonym">Epicrates strigilatus fosteri</name>
    <dbReference type="NCBI Taxonomy" id="51738"/>
    <lineage>
        <taxon>Eukaryota</taxon>
        <taxon>Metazoa</taxon>
        <taxon>Chordata</taxon>
        <taxon>Craniata</taxon>
        <taxon>Vertebrata</taxon>
        <taxon>Euteleostomi</taxon>
        <taxon>Lepidosauria</taxon>
        <taxon>Squamata</taxon>
        <taxon>Bifurcata</taxon>
        <taxon>Unidentata</taxon>
        <taxon>Episquamata</taxon>
        <taxon>Toxicofera</taxon>
        <taxon>Serpentes</taxon>
        <taxon>Henophidia</taxon>
        <taxon>Boidae</taxon>
        <taxon>Boinae</taxon>
        <taxon>Chilabothrus</taxon>
    </lineage>
</organism>
<proteinExistence type="inferred from homology"/>
<feature type="chain" id="PRO_0000060928" description="Cytochrome b">
    <location>
        <begin position="1"/>
        <end position="370"/>
    </location>
</feature>
<feature type="transmembrane region" description="Helical" evidence="2">
    <location>
        <begin position="25"/>
        <end position="45"/>
    </location>
</feature>
<feature type="transmembrane region" description="Helical" evidence="2">
    <location>
        <begin position="69"/>
        <end position="90"/>
    </location>
</feature>
<feature type="transmembrane region" description="Helical" evidence="2">
    <location>
        <begin position="105"/>
        <end position="125"/>
    </location>
</feature>
<feature type="transmembrane region" description="Helical" evidence="2">
    <location>
        <begin position="170"/>
        <end position="190"/>
    </location>
</feature>
<feature type="transmembrane region" description="Helical" evidence="2">
    <location>
        <begin position="218"/>
        <end position="238"/>
    </location>
</feature>
<feature type="transmembrane region" description="Helical" evidence="2">
    <location>
        <begin position="280"/>
        <end position="300"/>
    </location>
</feature>
<feature type="transmembrane region" description="Helical" evidence="2">
    <location>
        <begin position="312"/>
        <end position="332"/>
    </location>
</feature>
<feature type="transmembrane region" description="Helical" evidence="2">
    <location>
        <begin position="339"/>
        <end position="358"/>
    </location>
</feature>
<feature type="binding site" description="axial binding residue" evidence="2">
    <location>
        <position position="75"/>
    </location>
    <ligand>
        <name>heme b</name>
        <dbReference type="ChEBI" id="CHEBI:60344"/>
        <label>b562</label>
    </ligand>
    <ligandPart>
        <name>Fe</name>
        <dbReference type="ChEBI" id="CHEBI:18248"/>
    </ligandPart>
</feature>
<feature type="binding site" description="axial binding residue" evidence="2">
    <location>
        <position position="89"/>
    </location>
    <ligand>
        <name>heme b</name>
        <dbReference type="ChEBI" id="CHEBI:60344"/>
        <label>b566</label>
    </ligand>
    <ligandPart>
        <name>Fe</name>
        <dbReference type="ChEBI" id="CHEBI:18248"/>
    </ligandPart>
</feature>
<feature type="binding site" description="axial binding residue" evidence="2">
    <location>
        <position position="174"/>
    </location>
    <ligand>
        <name>heme b</name>
        <dbReference type="ChEBI" id="CHEBI:60344"/>
        <label>b562</label>
    </ligand>
    <ligandPart>
        <name>Fe</name>
        <dbReference type="ChEBI" id="CHEBI:18248"/>
    </ligandPart>
</feature>
<feature type="binding site" description="axial binding residue" evidence="2">
    <location>
        <position position="188"/>
    </location>
    <ligand>
        <name>heme b</name>
        <dbReference type="ChEBI" id="CHEBI:60344"/>
        <label>b566</label>
    </ligand>
    <ligandPart>
        <name>Fe</name>
        <dbReference type="ChEBI" id="CHEBI:18248"/>
    </ligandPart>
</feature>
<feature type="binding site" evidence="2">
    <location>
        <position position="193"/>
    </location>
    <ligand>
        <name>a ubiquinone</name>
        <dbReference type="ChEBI" id="CHEBI:16389"/>
    </ligand>
</feature>
<name>CYB_CHISF</name>